<sequence>MQTQEILRILRLPELSDLGQFFRSLSATTLVSMGALAAILAYWLTHRPKALQPPCNLLMQSEEVEDSGGARRSVIGDCTQLLTHYYDDARTMYQVFRRGLSISGNGPCLGFRKPEQPYQWLSYQEVAKRAEFLGSGLLQHDCKVGTEQFIGVFAQNRPEWIIAELACYTYSMVVVPLYDTLGPGSIRYIINTADICTVIVDKPHKAILLLEHVERKETPGLKLVILMEPFDDALRERGKKCGVDIKSMQAIEDSGQENHRVPVPPRPDDLSIVCFTSGTTGNPKGAMLTHGNVVADFSGFLKVTESQWAPTCADVHFSYLPLAHMFERMVQSVVYCHGGRVGFFQGDIRLLSDDMKALRPTIFPVVPRLLNRMYDKIFHQADTSLKRWLLEFAAKRKQAEVRSGIIRNNSIWDELFFNKIQASLGGHVRMIVTGAAPASPTVLGFLRAALGCQVYEGYGQTECTAGCTFTTPGDWTSGHVGAPLPCNHIKLVDAEELNYWTSKGEGEICVKGPNVFKGYLKDEDRTKEALDSDGWLHTGDIGKWLPEGTLKIIDRKKHIFKLAQGEYVAPEKIENIYIRSEPVAQIYVHGDSLKAFLVGIVVPDPEVMPCWAQKKGIEGNYQELCKSKELKKAILDDMVMLGKESGLHSFEQVKAIYIHCDMFSVQNGLLTPTLKAKRPELREYFKKQIEELYSISM</sequence>
<keyword id="KW-0025">Alternative splicing</keyword>
<keyword id="KW-0067">ATP-binding</keyword>
<keyword id="KW-0256">Endoplasmic reticulum</keyword>
<keyword id="KW-0276">Fatty acid metabolism</keyword>
<keyword id="KW-0436">Ligase</keyword>
<keyword id="KW-0443">Lipid metabolism</keyword>
<keyword id="KW-0460">Magnesium</keyword>
<keyword id="KW-0472">Membrane</keyword>
<keyword id="KW-0492">Microsome</keyword>
<keyword id="KW-0496">Mitochondrion</keyword>
<keyword id="KW-1000">Mitochondrion outer membrane</keyword>
<keyword id="KW-0547">Nucleotide-binding</keyword>
<keyword id="KW-0576">Peroxisome</keyword>
<keyword id="KW-1185">Reference proteome</keyword>
<keyword id="KW-0735">Signal-anchor</keyword>
<keyword id="KW-0812">Transmembrane</keyword>
<keyword id="KW-1133">Transmembrane helix</keyword>
<dbReference type="EC" id="6.2.1.3" evidence="5"/>
<dbReference type="EC" id="6.2.1.15" evidence="5"/>
<dbReference type="EMBL" id="S56508">
    <property type="protein sequence ID" value="AAB19809.2"/>
    <property type="molecule type" value="mRNA"/>
</dbReference>
<dbReference type="EMBL" id="D10041">
    <property type="protein sequence ID" value="BAA00932.1"/>
    <property type="molecule type" value="mRNA"/>
</dbReference>
<dbReference type="EMBL" id="CB582512">
    <property type="status" value="NOT_ANNOTATED_CDS"/>
    <property type="molecule type" value="mRNA"/>
</dbReference>
<dbReference type="EMBL" id="AY625254">
    <property type="protein sequence ID" value="AAT41589.1"/>
    <property type="molecule type" value="mRNA"/>
</dbReference>
<dbReference type="PIR" id="JX0205">
    <property type="entry name" value="JX0205"/>
</dbReference>
<dbReference type="RefSeq" id="NP_570095.2">
    <molecule id="P33124-1"/>
    <property type="nucleotide sequence ID" value="NM_130739.2"/>
</dbReference>
<dbReference type="RefSeq" id="XP_006246285.1">
    <property type="nucleotide sequence ID" value="XM_006246223.3"/>
</dbReference>
<dbReference type="RefSeq" id="XP_006246286.1">
    <molecule id="P33124-2"/>
    <property type="nucleotide sequence ID" value="XM_006246224.5"/>
</dbReference>
<dbReference type="SMR" id="P33124"/>
<dbReference type="FunCoup" id="P33124">
    <property type="interactions" value="1360"/>
</dbReference>
<dbReference type="STRING" id="10116.ENSRNOP00000055608"/>
<dbReference type="SwissLipids" id="SLP:000001686"/>
<dbReference type="iPTMnet" id="P33124"/>
<dbReference type="PhosphoSitePlus" id="P33124"/>
<dbReference type="SwissPalm" id="P33124"/>
<dbReference type="jPOST" id="P33124"/>
<dbReference type="PaxDb" id="10116-ENSRNOP00000055608"/>
<dbReference type="Ensembl" id="ENSRNOT00000030760.5">
    <molecule id="P33124-2"/>
    <property type="protein sequence ID" value="ENSRNOP00000033248.5"/>
    <property type="gene ID" value="ENSRNOG00000026745.8"/>
</dbReference>
<dbReference type="GeneID" id="117243"/>
<dbReference type="KEGG" id="rno:117243"/>
<dbReference type="UCSC" id="RGD:69403">
    <molecule id="P33124-1"/>
    <property type="organism name" value="rat"/>
</dbReference>
<dbReference type="AGR" id="RGD:69403"/>
<dbReference type="CTD" id="23305"/>
<dbReference type="RGD" id="69403">
    <property type="gene designation" value="Acsl6"/>
</dbReference>
<dbReference type="VEuPathDB" id="HostDB:ENSRNOG00000026745"/>
<dbReference type="eggNOG" id="KOG1256">
    <property type="taxonomic scope" value="Eukaryota"/>
</dbReference>
<dbReference type="GeneTree" id="ENSGT00940000162308"/>
<dbReference type="InParanoid" id="P33124"/>
<dbReference type="OrthoDB" id="1700726at2759"/>
<dbReference type="PhylomeDB" id="P33124"/>
<dbReference type="BRENDA" id="6.2.1.3">
    <property type="organism ID" value="5301"/>
</dbReference>
<dbReference type="Reactome" id="R-RNO-75876">
    <property type="pathway name" value="Synthesis of very long-chain fatty acyl-CoAs"/>
</dbReference>
<dbReference type="SABIO-RK" id="P33124"/>
<dbReference type="PRO" id="PR:P33124"/>
<dbReference type="Proteomes" id="UP000002494">
    <property type="component" value="Chromosome 10"/>
</dbReference>
<dbReference type="Bgee" id="ENSRNOG00000026745">
    <property type="expression patterns" value="Expressed in frontal cortex and 12 other cell types or tissues"/>
</dbReference>
<dbReference type="ExpressionAtlas" id="P33124">
    <property type="expression patterns" value="baseline and differential"/>
</dbReference>
<dbReference type="GO" id="GO:0005783">
    <property type="term" value="C:endoplasmic reticulum"/>
    <property type="evidence" value="ECO:0000250"/>
    <property type="project" value="UniProtKB"/>
</dbReference>
<dbReference type="GO" id="GO:0005789">
    <property type="term" value="C:endoplasmic reticulum membrane"/>
    <property type="evidence" value="ECO:0007669"/>
    <property type="project" value="UniProtKB-SubCell"/>
</dbReference>
<dbReference type="GO" id="GO:0016020">
    <property type="term" value="C:membrane"/>
    <property type="evidence" value="ECO:0000266"/>
    <property type="project" value="RGD"/>
</dbReference>
<dbReference type="GO" id="GO:0005741">
    <property type="term" value="C:mitochondrial outer membrane"/>
    <property type="evidence" value="ECO:0007669"/>
    <property type="project" value="UniProtKB-SubCell"/>
</dbReference>
<dbReference type="GO" id="GO:0005778">
    <property type="term" value="C:peroxisomal membrane"/>
    <property type="evidence" value="ECO:0007669"/>
    <property type="project" value="UniProtKB-SubCell"/>
</dbReference>
<dbReference type="GO" id="GO:0047676">
    <property type="term" value="F:arachidonate-CoA ligase activity"/>
    <property type="evidence" value="ECO:0000314"/>
    <property type="project" value="UniProtKB"/>
</dbReference>
<dbReference type="GO" id="GO:0005524">
    <property type="term" value="F:ATP binding"/>
    <property type="evidence" value="ECO:0007669"/>
    <property type="project" value="UniProtKB-KW"/>
</dbReference>
<dbReference type="GO" id="GO:0019899">
    <property type="term" value="F:enzyme binding"/>
    <property type="evidence" value="ECO:0000266"/>
    <property type="project" value="RGD"/>
</dbReference>
<dbReference type="GO" id="GO:0004467">
    <property type="term" value="F:long-chain fatty acid-CoA ligase activity"/>
    <property type="evidence" value="ECO:0000314"/>
    <property type="project" value="UniProtKB"/>
</dbReference>
<dbReference type="GO" id="GO:0042803">
    <property type="term" value="F:protein homodimerization activity"/>
    <property type="evidence" value="ECO:0000314"/>
    <property type="project" value="UniProtKB"/>
</dbReference>
<dbReference type="GO" id="GO:0032869">
    <property type="term" value="P:cellular response to insulin stimulus"/>
    <property type="evidence" value="ECO:0000270"/>
    <property type="project" value="RGD"/>
</dbReference>
<dbReference type="GO" id="GO:0015908">
    <property type="term" value="P:fatty acid transport"/>
    <property type="evidence" value="ECO:0000316"/>
    <property type="project" value="RGD"/>
</dbReference>
<dbReference type="GO" id="GO:0001676">
    <property type="term" value="P:long-chain fatty acid metabolic process"/>
    <property type="evidence" value="ECO:0000314"/>
    <property type="project" value="UniProtKB"/>
</dbReference>
<dbReference type="GO" id="GO:0035338">
    <property type="term" value="P:long-chain fatty-acyl-CoA biosynthetic process"/>
    <property type="evidence" value="ECO:0000316"/>
    <property type="project" value="RGD"/>
</dbReference>
<dbReference type="GO" id="GO:0007405">
    <property type="term" value="P:neuroblast proliferation"/>
    <property type="evidence" value="ECO:0000266"/>
    <property type="project" value="RGD"/>
</dbReference>
<dbReference type="GO" id="GO:0048666">
    <property type="term" value="P:neuron development"/>
    <property type="evidence" value="ECO:0000270"/>
    <property type="project" value="RGD"/>
</dbReference>
<dbReference type="GO" id="GO:0008654">
    <property type="term" value="P:phospholipid biosynthetic process"/>
    <property type="evidence" value="ECO:0000315"/>
    <property type="project" value="RGD"/>
</dbReference>
<dbReference type="GO" id="GO:0010747">
    <property type="term" value="P:positive regulation of long-chain fatty acid import across plasma membrane"/>
    <property type="evidence" value="ECO:0000315"/>
    <property type="project" value="RGD"/>
</dbReference>
<dbReference type="GO" id="GO:0010976">
    <property type="term" value="P:positive regulation of neuron projection development"/>
    <property type="evidence" value="ECO:0000315"/>
    <property type="project" value="RGD"/>
</dbReference>
<dbReference type="GO" id="GO:0009629">
    <property type="term" value="P:response to gravity"/>
    <property type="evidence" value="ECO:0000270"/>
    <property type="project" value="RGD"/>
</dbReference>
<dbReference type="GO" id="GO:0001666">
    <property type="term" value="P:response to hypoxia"/>
    <property type="evidence" value="ECO:0000270"/>
    <property type="project" value="RGD"/>
</dbReference>
<dbReference type="GO" id="GO:0007584">
    <property type="term" value="P:response to nutrient"/>
    <property type="evidence" value="ECO:0000270"/>
    <property type="project" value="RGD"/>
</dbReference>
<dbReference type="GO" id="GO:0048545">
    <property type="term" value="P:response to steroid hormone"/>
    <property type="evidence" value="ECO:0000270"/>
    <property type="project" value="RGD"/>
</dbReference>
<dbReference type="GO" id="GO:0019432">
    <property type="term" value="P:triglyceride biosynthetic process"/>
    <property type="evidence" value="ECO:0000316"/>
    <property type="project" value="RGD"/>
</dbReference>
<dbReference type="GO" id="GO:0000038">
    <property type="term" value="P:very long-chain fatty acid metabolic process"/>
    <property type="evidence" value="ECO:0000318"/>
    <property type="project" value="GO_Central"/>
</dbReference>
<dbReference type="CDD" id="cd05927">
    <property type="entry name" value="LC-FACS_euk"/>
    <property type="match status" value="1"/>
</dbReference>
<dbReference type="FunFam" id="3.40.50.12780:FF:000006">
    <property type="entry name" value="long-chain-fatty-acid--CoA ligase 6 isoform X2"/>
    <property type="match status" value="1"/>
</dbReference>
<dbReference type="Gene3D" id="3.40.50.12780">
    <property type="entry name" value="N-terminal domain of ligase-like"/>
    <property type="match status" value="1"/>
</dbReference>
<dbReference type="InterPro" id="IPR020845">
    <property type="entry name" value="AMP-binding_CS"/>
</dbReference>
<dbReference type="InterPro" id="IPR000873">
    <property type="entry name" value="AMP-dep_synth/lig_dom"/>
</dbReference>
<dbReference type="InterPro" id="IPR042099">
    <property type="entry name" value="ANL_N_sf"/>
</dbReference>
<dbReference type="InterPro" id="IPR045311">
    <property type="entry name" value="LC-FACS_euk"/>
</dbReference>
<dbReference type="PANTHER" id="PTHR43272">
    <property type="entry name" value="LONG-CHAIN-FATTY-ACID--COA LIGASE"/>
    <property type="match status" value="1"/>
</dbReference>
<dbReference type="PANTHER" id="PTHR43272:SF54">
    <property type="entry name" value="LONG-CHAIN-FATTY-ACID--COA LIGASE 6"/>
    <property type="match status" value="1"/>
</dbReference>
<dbReference type="Pfam" id="PF00501">
    <property type="entry name" value="AMP-binding"/>
    <property type="match status" value="1"/>
</dbReference>
<dbReference type="SUPFAM" id="SSF56801">
    <property type="entry name" value="Acetyl-CoA synthetase-like"/>
    <property type="match status" value="1"/>
</dbReference>
<dbReference type="PROSITE" id="PS00455">
    <property type="entry name" value="AMP_BINDING"/>
    <property type="match status" value="1"/>
</dbReference>
<protein>
    <recommendedName>
        <fullName evidence="8">Long-chain-fatty-acid--CoA ligase 6</fullName>
        <ecNumber evidence="5">6.2.1.3</ecNumber>
    </recommendedName>
    <alternativeName>
        <fullName evidence="8">Arachidonate--CoA ligase</fullName>
        <ecNumber evidence="5">6.2.1.15</ecNumber>
    </alternativeName>
    <alternativeName>
        <fullName>Long-chain acyl-CoA synthetase 6</fullName>
        <shortName>LACS 6</shortName>
    </alternativeName>
    <alternativeName>
        <fullName>Long-chain-fatty-acid--CoA ligase, brain isozyme</fullName>
    </alternativeName>
</protein>
<reference key="1">
    <citation type="journal article" date="1992" name="J. Biochem.">
        <title>Cloning and functional expression of a novel long-chain acyl-CoA synthetase expressed in brain.</title>
        <authorList>
            <person name="Fujino T."/>
            <person name="Yamamoto T."/>
        </authorList>
    </citation>
    <scope>NUCLEOTIDE SEQUENCE [MRNA] (ISOFORM 1)</scope>
    <source>
        <strain>Wistar</strain>
        <tissue>Brain</tissue>
    </source>
</reference>
<reference key="2">
    <citation type="journal article" date="2005" name="Biochemistry">
        <title>Characterization of recombinant long-chain rat acyl-CoA synthetase isoforms 3 and 6: identification of a novel variant of isoform 6.</title>
        <authorList>
            <person name="Van Horn C.G."/>
            <person name="Caviglia J.M."/>
            <person name="Li L.O."/>
            <person name="Wang S."/>
            <person name="Granger D.A."/>
            <person name="Coleman R.A."/>
        </authorList>
    </citation>
    <scope>NUCLEOTIDE SEQUENCE [MRNA] (ISOFORM 2)</scope>
    <scope>ALTERNATIVE SPLICING</scope>
    <scope>TISSUE SPECIFICITY</scope>
    <scope>BIOPHYSICOCHEMICAL PROPERTIES</scope>
    <source>
        <tissue>Brain</tissue>
    </source>
</reference>
<reference key="3">
    <citation type="submission" date="2003-04" db="EMBL/GenBank/DDBJ databases">
        <title>Amgen rat EST program.</title>
        <authorList>
            <consortium name="Amgen EST program"/>
        </authorList>
    </citation>
    <scope>NUCLEOTIDE SEQUENCE [LARGE SCALE MRNA] OF 1-160 (ISOFORM 1)</scope>
    <source>
        <tissue>Spinal ganglion</tissue>
    </source>
</reference>
<reference key="4">
    <citation type="journal article" date="1991" name="J. Biol. Chem.">
        <title>Molecular cloning and sequencing of cDNA encoding the phosphatidylinositol kinase from rat brain.</title>
        <authorList>
            <person name="Yamakawa A."/>
            <person name="Nishizawa M."/>
            <person name="Fujiwara K.T."/>
            <person name="Kawai S."/>
            <person name="Kawasaki H."/>
            <person name="Suzuki K."/>
            <person name="Takenawa T."/>
        </authorList>
    </citation>
    <scope>RETRACTED PAPER</scope>
    <source>
        <tissue>Brain</tissue>
    </source>
</reference>
<reference key="5">
    <citation type="journal article" date="1992" name="J. Biol. Chem.">
        <authorList>
            <person name="Yamakawa A."/>
            <person name="Nishizawa M."/>
            <person name="Fujiwara K.T."/>
            <person name="Kawai S."/>
            <person name="Kawasaki H."/>
            <person name="Suzuki K."/>
            <person name="Takenawa T."/>
        </authorList>
    </citation>
    <scope>RETRACTION NOTICE OF PUBMED:1654331</scope>
</reference>
<reference key="6">
    <citation type="journal article" date="1996" name="Eur. J. Biochem.">
        <title>Biochemical studies of two rat acyl-CoA synthetases, ACS1 and ACS2.</title>
        <authorList>
            <person name="Iijima H."/>
            <person name="Fujino T."/>
            <person name="Minekura H."/>
            <person name="Suzuki H."/>
            <person name="Kang M.-J."/>
            <person name="Yamamoto T.T."/>
        </authorList>
    </citation>
    <scope>DEVELOPMENTAL STAGE</scope>
</reference>
<reference key="7">
    <citation type="journal article" date="2017" name="J. Lipid Res.">
        <title>Long-chain acyl-CoA synthetase isoforms differ in preferences for eicosanoid species and long-chain fatty acids.</title>
        <authorList>
            <person name="Klett E.L."/>
            <person name="Chen S."/>
            <person name="Yechoor A."/>
            <person name="Lih F.B."/>
            <person name="Coleman R.A."/>
        </authorList>
    </citation>
    <scope>CATALYTIC ACTIVITY</scope>
    <scope>FUNCTION</scope>
    <scope>BIOPHYSICOCHEMICAL PROPERTIES</scope>
</reference>
<reference key="8">
    <citation type="journal article" date="2017" name="J. Lipid Res.">
        <authorList>
            <person name="Klett E.L."/>
            <person name="Chen S."/>
            <person name="Yechoor A."/>
            <person name="Lih F.B."/>
            <person name="Coleman R.A."/>
        </authorList>
    </citation>
    <scope>ERRATUM OF PUBMED:28209804</scope>
</reference>
<proteinExistence type="evidence at protein level"/>
<evidence type="ECO:0000250" key="1"/>
<evidence type="ECO:0000250" key="2">
    <source>
        <dbReference type="UniProtKB" id="Q9UKU0"/>
    </source>
</evidence>
<evidence type="ECO:0000255" key="3"/>
<evidence type="ECO:0000269" key="4">
    <source>
    </source>
</evidence>
<evidence type="ECO:0000269" key="5">
    <source>
    </source>
</evidence>
<evidence type="ECO:0000269" key="6">
    <source>
    </source>
</evidence>
<evidence type="ECO:0000303" key="7">
    <source>
    </source>
</evidence>
<evidence type="ECO:0000305" key="8"/>
<evidence type="ECO:0000305" key="9">
    <source>
    </source>
</evidence>
<evidence type="ECO:0000312" key="10">
    <source>
        <dbReference type="RGD" id="69403"/>
    </source>
</evidence>
<name>ACSL6_RAT</name>
<feature type="chain" id="PRO_0000193117" description="Long-chain-fatty-acid--CoA ligase 6">
    <location>
        <begin position="1"/>
        <end position="697"/>
    </location>
</feature>
<feature type="transmembrane region" description="Helical; Signal-anchor for type III membrane protein" evidence="3">
    <location>
        <begin position="25"/>
        <end position="45"/>
    </location>
</feature>
<feature type="topological domain" description="Cytoplasmic" evidence="3">
    <location>
        <begin position="46"/>
        <end position="697"/>
    </location>
</feature>
<feature type="splice variant" id="VSP_057107" description="In isoform 2." evidence="7">
    <original>SQWAPTCADVHFSY</original>
    <variation>KVIFPRQDDVLISF</variation>
    <location>
        <begin position="306"/>
        <end position="319"/>
    </location>
</feature>
<feature type="splice variant" id="VSP_057108" description="In isoform 2." evidence="7">
    <original>MV</original>
    <variation>VI</variation>
    <location>
        <begin position="329"/>
        <end position="330"/>
    </location>
</feature>
<comment type="function">
    <text evidence="5">Catalyzes the conversion of long-chain fatty acids to their active form acyl-CoA for both synthesis of cellular lipids, and degradation via beta-oxidation (PubMed:28209804). Plays an important role in fatty acid metabolism in brain and the acyl-CoAs produced may be utilized exclusively for the synthesis of the brain lipid.</text>
</comment>
<comment type="catalytic activity">
    <reaction evidence="5">
        <text>a long-chain fatty acid + ATP + CoA = a long-chain fatty acyl-CoA + AMP + diphosphate</text>
        <dbReference type="Rhea" id="RHEA:15421"/>
        <dbReference type="ChEBI" id="CHEBI:30616"/>
        <dbReference type="ChEBI" id="CHEBI:33019"/>
        <dbReference type="ChEBI" id="CHEBI:57287"/>
        <dbReference type="ChEBI" id="CHEBI:57560"/>
        <dbReference type="ChEBI" id="CHEBI:83139"/>
        <dbReference type="ChEBI" id="CHEBI:456215"/>
        <dbReference type="EC" id="6.2.1.3"/>
    </reaction>
    <physiologicalReaction direction="left-to-right" evidence="9">
        <dbReference type="Rhea" id="RHEA:15422"/>
    </physiologicalReaction>
</comment>
<comment type="catalytic activity">
    <reaction evidence="5">
        <text>(5Z,8Z,11Z,14Z)-eicosatetraenoate + ATP + CoA = (5Z,8Z,11Z,14Z)-eicosatetraenoyl-CoA + AMP + diphosphate</text>
        <dbReference type="Rhea" id="RHEA:19713"/>
        <dbReference type="ChEBI" id="CHEBI:30616"/>
        <dbReference type="ChEBI" id="CHEBI:32395"/>
        <dbReference type="ChEBI" id="CHEBI:33019"/>
        <dbReference type="ChEBI" id="CHEBI:57287"/>
        <dbReference type="ChEBI" id="CHEBI:57368"/>
        <dbReference type="ChEBI" id="CHEBI:456215"/>
        <dbReference type="EC" id="6.2.1.15"/>
    </reaction>
    <physiologicalReaction direction="left-to-right" evidence="9">
        <dbReference type="Rhea" id="RHEA:19714"/>
    </physiologicalReaction>
</comment>
<comment type="catalytic activity">
    <reaction evidence="5">
        <text>15-hydroxy-(5Z,8Z,11Z,13E)-eicosatetraenoate + ATP + CoA = 15-hydroxy-(5Z,8Z,11Z,13E)-eicosatetraenoyl-CoA + AMP + diphosphate</text>
        <dbReference type="Rhea" id="RHEA:52116"/>
        <dbReference type="ChEBI" id="CHEBI:30616"/>
        <dbReference type="ChEBI" id="CHEBI:33019"/>
        <dbReference type="ChEBI" id="CHEBI:57287"/>
        <dbReference type="ChEBI" id="CHEBI:78832"/>
        <dbReference type="ChEBI" id="CHEBI:136409"/>
        <dbReference type="ChEBI" id="CHEBI:456215"/>
    </reaction>
    <physiologicalReaction direction="left-to-right" evidence="9">
        <dbReference type="Rhea" id="RHEA:52117"/>
    </physiologicalReaction>
</comment>
<comment type="catalytic activity">
    <reaction evidence="5">
        <text>12-hydroxy-(5Z,8Z,10E,14Z)-eicosatetraenoate + ATP + CoA = 12-hydroxy-(5Z,8Z,10E,14Z)-eicosatetraenoyl-CoA + AMP + diphosphate</text>
        <dbReference type="Rhea" id="RHEA:52112"/>
        <dbReference type="ChEBI" id="CHEBI:30616"/>
        <dbReference type="ChEBI" id="CHEBI:33019"/>
        <dbReference type="ChEBI" id="CHEBI:57287"/>
        <dbReference type="ChEBI" id="CHEBI:90718"/>
        <dbReference type="ChEBI" id="CHEBI:136408"/>
        <dbReference type="ChEBI" id="CHEBI:456215"/>
    </reaction>
    <physiologicalReaction direction="left-to-right" evidence="9">
        <dbReference type="Rhea" id="RHEA:52113"/>
    </physiologicalReaction>
</comment>
<comment type="catalytic activity">
    <reaction evidence="5">
        <text>5-hydroxy-(6E,8Z,11Z,14Z)-eicosatetraenoate + ATP + CoA = 5-hydroxy-(6E,8Z,11Z,14Z)-eicosatetraenoyl-CoA + AMP + diphosphate</text>
        <dbReference type="Rhea" id="RHEA:52108"/>
        <dbReference type="ChEBI" id="CHEBI:30616"/>
        <dbReference type="ChEBI" id="CHEBI:33019"/>
        <dbReference type="ChEBI" id="CHEBI:57287"/>
        <dbReference type="ChEBI" id="CHEBI:65341"/>
        <dbReference type="ChEBI" id="CHEBI:136407"/>
        <dbReference type="ChEBI" id="CHEBI:456215"/>
    </reaction>
    <physiologicalReaction direction="left-to-right" evidence="9">
        <dbReference type="Rhea" id="RHEA:52109"/>
    </physiologicalReaction>
</comment>
<comment type="catalytic activity">
    <reaction evidence="2">
        <text>hexadecanoate + ATP + CoA = hexadecanoyl-CoA + AMP + diphosphate</text>
        <dbReference type="Rhea" id="RHEA:30751"/>
        <dbReference type="ChEBI" id="CHEBI:7896"/>
        <dbReference type="ChEBI" id="CHEBI:30616"/>
        <dbReference type="ChEBI" id="CHEBI:33019"/>
        <dbReference type="ChEBI" id="CHEBI:57287"/>
        <dbReference type="ChEBI" id="CHEBI:57379"/>
        <dbReference type="ChEBI" id="CHEBI:456215"/>
    </reaction>
    <physiologicalReaction direction="left-to-right" evidence="2">
        <dbReference type="Rhea" id="RHEA:30752"/>
    </physiologicalReaction>
</comment>
<comment type="catalytic activity">
    <reaction evidence="2">
        <text>(E)-hexadec-2-enoate + ATP + CoA = (2E)-hexadecenoyl-CoA + AMP + diphosphate</text>
        <dbReference type="Rhea" id="RHEA:36139"/>
        <dbReference type="ChEBI" id="CHEBI:30616"/>
        <dbReference type="ChEBI" id="CHEBI:33019"/>
        <dbReference type="ChEBI" id="CHEBI:57287"/>
        <dbReference type="ChEBI" id="CHEBI:61526"/>
        <dbReference type="ChEBI" id="CHEBI:72745"/>
        <dbReference type="ChEBI" id="CHEBI:456215"/>
    </reaction>
    <physiologicalReaction direction="left-to-right" evidence="2">
        <dbReference type="Rhea" id="RHEA:36140"/>
    </physiologicalReaction>
</comment>
<comment type="cofactor">
    <cofactor>
        <name>Mg(2+)</name>
        <dbReference type="ChEBI" id="CHEBI:18420"/>
    </cofactor>
</comment>
<comment type="biophysicochemical properties">
    <kinetics>
        <KM evidence="4">12210 uM for ATP (Isoform 1)</KM>
        <KM evidence="4">4.7 uM for CoA (Isoform 1)</KM>
        <KM evidence="4">6 uM for palmitate (Isoform 1)</KM>
        <KM evidence="4">3 uM for oleate (Isoform 1)</KM>
        <KM evidence="4">9.7 uM for arachidonate (Isoform 1)</KM>
        <KM evidence="4">1480 uM for ATP (Isoform 2)</KM>
        <KM evidence="4">2.4 uM for CoA (Isoform 2)</KM>
        <KM evidence="4">3.6 uM for palmitate (Isoform 2)</KM>
        <KM evidence="4">5.3 uM for oleate (Isoform 2)</KM>
        <KM evidence="4">6.5 uM for arachidonate (Isoform 2)</KM>
        <KM evidence="5">3 uM for palmitate (when expreesed in bacteria)</KM>
        <KM evidence="5">4.4 uM for stearate (when expreesed in bacteria)</KM>
        <KM evidence="5">4.4 uM for oleate (when expreesed in bacteria)</KM>
        <KM evidence="5">6 uM for linoleate (when expreesed in bacteria)</KM>
        <KM evidence="5">2.9 uM for arachidonate (when expreesed in bacteria)</KM>
        <Vmax evidence="4">208.0 nmol/min/mg enzyme with palmitate as substrate (Isoform 1)</Vmax>
        <Vmax evidence="4">153.0 nmol/min/mg enzyme with oleate as substrate (Isoform 1)</Vmax>
        <Vmax evidence="4">139.0 nmol/min/mg enzyme with arachidonate as substrate (Isoform 1)</Vmax>
        <Vmax evidence="4">739.0 nmol/min/mg enzyme with palmitate as substrate (Isoform 2)</Vmax>
        <Vmax evidence="4">1088.0 nmol/min/mg enzyme with oleate as substrate (Isoform 2)</Vmax>
        <Vmax evidence="4">1212.0 nmol/min/mg enzyme with arachidonate as substrate (Isoform 2)</Vmax>
        <Vmax evidence="5">3993.0 nmol/min/mg enzyme with palmitate as substrate (when expreesed in bacteria)</Vmax>
        <Vmax evidence="5">1727.0 nmol/min/mg enzyme with stearate as substrate (when expreesed in bacteria)</Vmax>
        <Vmax evidence="5">2238.0 nmol/min/mg enzyme with oleate as substrate (when expreesed in bacteria)</Vmax>
        <Vmax evidence="5">1763.0 nmol/min/mg enzyme with linoleate as substrate (when expreesed in bacteria)</Vmax>
        <Vmax evidence="5">1682.0 nmol/min/mg enzyme with arachidonate as substrate (when expreesed in bacteria)</Vmax>
    </kinetics>
</comment>
<comment type="subcellular location">
    <subcellularLocation>
        <location evidence="1">Mitochondrion outer membrane</location>
        <topology evidence="1">Single-pass type III membrane protein</topology>
    </subcellularLocation>
    <subcellularLocation>
        <location evidence="1">Peroxisome membrane</location>
        <topology evidence="1">Single-pass type III membrane protein</topology>
    </subcellularLocation>
    <subcellularLocation>
        <location evidence="1">Microsome membrane</location>
        <topology evidence="1">Single-pass type III membrane protein</topology>
    </subcellularLocation>
    <subcellularLocation>
        <location evidence="2">Endoplasmic reticulum membrane</location>
        <topology evidence="1">Single-pass type III membrane protein</topology>
    </subcellularLocation>
</comment>
<comment type="alternative products">
    <event type="alternative splicing"/>
    <isoform>
        <id>P33124-1</id>
        <name>1</name>
        <name>ACSL6_vs1</name>
        <sequence type="displayed"/>
    </isoform>
    <isoform>
        <id>P33124-2</id>
        <name>2</name>
        <name>ACSL6_vs2</name>
        <sequence type="described" ref="VSP_057107 VSP_057108"/>
    </isoform>
</comment>
<comment type="tissue specificity">
    <text>Expressed predominantly in brain and, to a much lesser extent, in heart and adrenal.</text>
</comment>
<comment type="developmental stage">
    <text evidence="6">Isoform 1 is detected 10 days after birth, and increased in a coordinate fashion during the development of brain, and the amount did not decrease when myelination was completed.</text>
</comment>
<comment type="miscellaneous">
    <text evidence="7">5 rat isozymes encoded by different genes have been described. ACSL6 corresponds to isozyme 2 (ACS2).</text>
</comment>
<comment type="miscellaneous">
    <molecule>Isoform 1</molecule>
    <text>Contains exon 14.</text>
</comment>
<comment type="miscellaneous">
    <molecule>Isoform 2</molecule>
    <text evidence="4">Contains exon 13. No differences in the affinity for fatty acids and CoA. Decreased affinity for ATP. Could play an important role at lower ATP levels. Expressed at lower level in the brain compared to isoform 1.</text>
</comment>
<comment type="similarity">
    <text evidence="8">Belongs to the ATP-dependent AMP-binding enzyme family.</text>
</comment>
<organism>
    <name type="scientific">Rattus norvegicus</name>
    <name type="common">Rat</name>
    <dbReference type="NCBI Taxonomy" id="10116"/>
    <lineage>
        <taxon>Eukaryota</taxon>
        <taxon>Metazoa</taxon>
        <taxon>Chordata</taxon>
        <taxon>Craniata</taxon>
        <taxon>Vertebrata</taxon>
        <taxon>Euteleostomi</taxon>
        <taxon>Mammalia</taxon>
        <taxon>Eutheria</taxon>
        <taxon>Euarchontoglires</taxon>
        <taxon>Glires</taxon>
        <taxon>Rodentia</taxon>
        <taxon>Myomorpha</taxon>
        <taxon>Muroidea</taxon>
        <taxon>Muridae</taxon>
        <taxon>Murinae</taxon>
        <taxon>Rattus</taxon>
    </lineage>
</organism>
<gene>
    <name evidence="10" type="primary">Acsl6</name>
    <name type="synonym">Acs2</name>
    <name type="synonym">Facl6</name>
</gene>
<accession>P33124</accession>
<accession>Q63835</accession>
<accession>Q6IU14</accession>